<name>MENC_BACSU</name>
<keyword id="KW-0456">Lyase</keyword>
<keyword id="KW-0460">Magnesium</keyword>
<keyword id="KW-0474">Menaquinone biosynthesis</keyword>
<keyword id="KW-0479">Metal-binding</keyword>
<keyword id="KW-1185">Reference proteome</keyword>
<proteinExistence type="evidence at protein level"/>
<gene>
    <name evidence="2" type="primary">menC</name>
    <name type="synonym">ytfD</name>
    <name type="ordered locus">BSU30780</name>
</gene>
<organism>
    <name type="scientific">Bacillus subtilis (strain 168)</name>
    <dbReference type="NCBI Taxonomy" id="224308"/>
    <lineage>
        <taxon>Bacteria</taxon>
        <taxon>Bacillati</taxon>
        <taxon>Bacillota</taxon>
        <taxon>Bacilli</taxon>
        <taxon>Bacillales</taxon>
        <taxon>Bacillaceae</taxon>
        <taxon>Bacillus</taxon>
    </lineage>
</organism>
<comment type="function">
    <text evidence="3">Converts 2-succinyl-6-hydroxy-2,4-cyclohexadiene-1-carboxylate (SHCHC) to 2-succinylbenzoate (OSB) (PubMed:10194342). Does not show detectable N-acylamino acid racemase (NAAAR) activity with N-acetyl-S-methionine as substrate (PubMed:10194342).</text>
</comment>
<comment type="catalytic activity">
    <reaction evidence="2 3">
        <text>(1R,6R)-6-hydroxy-2-succinyl-cyclohexa-2,4-diene-1-carboxylate = 2-succinylbenzoate + H2O</text>
        <dbReference type="Rhea" id="RHEA:10196"/>
        <dbReference type="ChEBI" id="CHEBI:15377"/>
        <dbReference type="ChEBI" id="CHEBI:18325"/>
        <dbReference type="ChEBI" id="CHEBI:58689"/>
        <dbReference type="EC" id="4.2.1.113"/>
    </reaction>
</comment>
<comment type="cofactor">
    <cofactor evidence="1 2">
        <name>a divalent metal cation</name>
        <dbReference type="ChEBI" id="CHEBI:60240"/>
    </cofactor>
</comment>
<comment type="biophysicochemical properties">
    <kinetics>
        <text evidence="3">kcat is 150 sec(-1) with SHCHC as substrate.</text>
    </kinetics>
</comment>
<comment type="pathway">
    <text evidence="1 2">Quinol/quinone metabolism; 1,4-dihydroxy-2-naphthoate biosynthesis; 1,4-dihydroxy-2-naphthoate from chorismate: step 4/7.</text>
</comment>
<comment type="pathway">
    <text evidence="1 2">Quinol/quinone metabolism; menaquinone biosynthesis.</text>
</comment>
<comment type="similarity">
    <text evidence="2">Belongs to the mandelate racemase/muconate lactonizing enzyme family. MenC type 2 subfamily.</text>
</comment>
<feature type="chain" id="PRO_0000171282" description="o-succinylbenzoate synthase">
    <location>
        <begin position="1"/>
        <end position="371"/>
    </location>
</feature>
<feature type="active site" description="Proton donor" evidence="1 2">
    <location>
        <position position="164"/>
    </location>
</feature>
<feature type="active site" description="Proton acceptor" evidence="1 2">
    <location>
        <position position="263"/>
    </location>
</feature>
<feature type="binding site" evidence="1 2">
    <location>
        <position position="189"/>
    </location>
    <ligand>
        <name>Mg(2+)</name>
        <dbReference type="ChEBI" id="CHEBI:18420"/>
    </ligand>
</feature>
<feature type="binding site" evidence="1 2">
    <location>
        <position position="214"/>
    </location>
    <ligand>
        <name>Mg(2+)</name>
        <dbReference type="ChEBI" id="CHEBI:18420"/>
    </ligand>
</feature>
<feature type="binding site" evidence="1 2">
    <location>
        <position position="239"/>
    </location>
    <ligand>
        <name>Mg(2+)</name>
        <dbReference type="ChEBI" id="CHEBI:18420"/>
    </ligand>
</feature>
<sequence length="371" mass="41629">MIEIEKITLYHLSMNLKKPFKNSIETLQERKFLIVEAIDTSGVTGWGEVSAFSSPWYTEETIGTCLHMLKDFFIPNVVGREFNHPSEVPDSLARYKGNRMAKAGLESAVWDIYAKKKGVSLAEALGGTRDKVPAGVVVGLAPLDDMLKEIESYQKEGYQRIKIKIQPGQDVELVKAIRSRFPTIPLMADANSSYELKDISRLKELDDYHLMMIEQPLQADDIVDHRHLQKHLKTAICLDESICSVDDARRAIELGSCKIINIKPSRVGGLTEALKIHDLCKEHHMQVWCGGMLETGISRAQNVALASLPQFTIPGDISSSSRYWDEDIVTPDIRIDNGFISVSKQPGLGVEVNQDIMRKYVTKMDVFTQHG</sequence>
<evidence type="ECO:0000250" key="1">
    <source>
        <dbReference type="UniProtKB" id="P29208"/>
    </source>
</evidence>
<evidence type="ECO:0000255" key="2">
    <source>
        <dbReference type="HAMAP-Rule" id="MF_01933"/>
    </source>
</evidence>
<evidence type="ECO:0000269" key="3">
    <source>
    </source>
</evidence>
<evidence type="ECO:0000303" key="4">
    <source>
    </source>
</evidence>
<evidence type="ECO:0000305" key="5"/>
<reference key="1">
    <citation type="journal article" date="1997" name="Microbiology">
        <title>Sequencing and functional annotation of the Bacillus subtilis genes in the 200 kb rrnB-dnaB region.</title>
        <authorList>
            <person name="Lapidus A."/>
            <person name="Galleron N."/>
            <person name="Sorokin A."/>
            <person name="Ehrlich S.D."/>
        </authorList>
    </citation>
    <scope>NUCLEOTIDE SEQUENCE [GENOMIC DNA]</scope>
    <source>
        <strain>168</strain>
    </source>
</reference>
<reference key="2">
    <citation type="journal article" date="1997" name="Nature">
        <title>The complete genome sequence of the Gram-positive bacterium Bacillus subtilis.</title>
        <authorList>
            <person name="Kunst F."/>
            <person name="Ogasawara N."/>
            <person name="Moszer I."/>
            <person name="Albertini A.M."/>
            <person name="Alloni G."/>
            <person name="Azevedo V."/>
            <person name="Bertero M.G."/>
            <person name="Bessieres P."/>
            <person name="Bolotin A."/>
            <person name="Borchert S."/>
            <person name="Borriss R."/>
            <person name="Boursier L."/>
            <person name="Brans A."/>
            <person name="Braun M."/>
            <person name="Brignell S.C."/>
            <person name="Bron S."/>
            <person name="Brouillet S."/>
            <person name="Bruschi C.V."/>
            <person name="Caldwell B."/>
            <person name="Capuano V."/>
            <person name="Carter N.M."/>
            <person name="Choi S.-K."/>
            <person name="Codani J.-J."/>
            <person name="Connerton I.F."/>
            <person name="Cummings N.J."/>
            <person name="Daniel R.A."/>
            <person name="Denizot F."/>
            <person name="Devine K.M."/>
            <person name="Duesterhoeft A."/>
            <person name="Ehrlich S.D."/>
            <person name="Emmerson P.T."/>
            <person name="Entian K.-D."/>
            <person name="Errington J."/>
            <person name="Fabret C."/>
            <person name="Ferrari E."/>
            <person name="Foulger D."/>
            <person name="Fritz C."/>
            <person name="Fujita M."/>
            <person name="Fujita Y."/>
            <person name="Fuma S."/>
            <person name="Galizzi A."/>
            <person name="Galleron N."/>
            <person name="Ghim S.-Y."/>
            <person name="Glaser P."/>
            <person name="Goffeau A."/>
            <person name="Golightly E.J."/>
            <person name="Grandi G."/>
            <person name="Guiseppi G."/>
            <person name="Guy B.J."/>
            <person name="Haga K."/>
            <person name="Haiech J."/>
            <person name="Harwood C.R."/>
            <person name="Henaut A."/>
            <person name="Hilbert H."/>
            <person name="Holsappel S."/>
            <person name="Hosono S."/>
            <person name="Hullo M.-F."/>
            <person name="Itaya M."/>
            <person name="Jones L.-M."/>
            <person name="Joris B."/>
            <person name="Karamata D."/>
            <person name="Kasahara Y."/>
            <person name="Klaerr-Blanchard M."/>
            <person name="Klein C."/>
            <person name="Kobayashi Y."/>
            <person name="Koetter P."/>
            <person name="Koningstein G."/>
            <person name="Krogh S."/>
            <person name="Kumano M."/>
            <person name="Kurita K."/>
            <person name="Lapidus A."/>
            <person name="Lardinois S."/>
            <person name="Lauber J."/>
            <person name="Lazarevic V."/>
            <person name="Lee S.-M."/>
            <person name="Levine A."/>
            <person name="Liu H."/>
            <person name="Masuda S."/>
            <person name="Mauel C."/>
            <person name="Medigue C."/>
            <person name="Medina N."/>
            <person name="Mellado R.P."/>
            <person name="Mizuno M."/>
            <person name="Moestl D."/>
            <person name="Nakai S."/>
            <person name="Noback M."/>
            <person name="Noone D."/>
            <person name="O'Reilly M."/>
            <person name="Ogawa K."/>
            <person name="Ogiwara A."/>
            <person name="Oudega B."/>
            <person name="Park S.-H."/>
            <person name="Parro V."/>
            <person name="Pohl T.M."/>
            <person name="Portetelle D."/>
            <person name="Porwollik S."/>
            <person name="Prescott A.M."/>
            <person name="Presecan E."/>
            <person name="Pujic P."/>
            <person name="Purnelle B."/>
            <person name="Rapoport G."/>
            <person name="Rey M."/>
            <person name="Reynolds S."/>
            <person name="Rieger M."/>
            <person name="Rivolta C."/>
            <person name="Rocha E."/>
            <person name="Roche B."/>
            <person name="Rose M."/>
            <person name="Sadaie Y."/>
            <person name="Sato T."/>
            <person name="Scanlan E."/>
            <person name="Schleich S."/>
            <person name="Schroeter R."/>
            <person name="Scoffone F."/>
            <person name="Sekiguchi J."/>
            <person name="Sekowska A."/>
            <person name="Seror S.J."/>
            <person name="Serror P."/>
            <person name="Shin B.-S."/>
            <person name="Soldo B."/>
            <person name="Sorokin A."/>
            <person name="Tacconi E."/>
            <person name="Takagi T."/>
            <person name="Takahashi H."/>
            <person name="Takemaru K."/>
            <person name="Takeuchi M."/>
            <person name="Tamakoshi A."/>
            <person name="Tanaka T."/>
            <person name="Terpstra P."/>
            <person name="Tognoni A."/>
            <person name="Tosato V."/>
            <person name="Uchiyama S."/>
            <person name="Vandenbol M."/>
            <person name="Vannier F."/>
            <person name="Vassarotti A."/>
            <person name="Viari A."/>
            <person name="Wambutt R."/>
            <person name="Wedler E."/>
            <person name="Wedler H."/>
            <person name="Weitzenegger T."/>
            <person name="Winters P."/>
            <person name="Wipat A."/>
            <person name="Yamamoto H."/>
            <person name="Yamane K."/>
            <person name="Yasumoto K."/>
            <person name="Yata K."/>
            <person name="Yoshida K."/>
            <person name="Yoshikawa H.-F."/>
            <person name="Zumstein E."/>
            <person name="Yoshikawa H."/>
            <person name="Danchin A."/>
        </authorList>
    </citation>
    <scope>NUCLEOTIDE SEQUENCE [LARGE SCALE GENOMIC DNA]</scope>
    <source>
        <strain>168</strain>
    </source>
</reference>
<reference key="3">
    <citation type="journal article" date="1999" name="Biochemistry">
        <title>Unexpected divergence of enzyme function and sequence: 'N-acylamino acid racemase' is o-succinylbenzoate synthase.</title>
        <authorList>
            <person name="Palmer D.R."/>
            <person name="Garrett J.B."/>
            <person name="Sharma V."/>
            <person name="Meganathan R."/>
            <person name="Babbitt P.C."/>
            <person name="Gerlt J.A."/>
        </authorList>
    </citation>
    <scope>FUNCTION</scope>
    <scope>CATALYTIC ACTIVITY</scope>
    <scope>BIOPHYSICOCHEMICAL PROPERTIES</scope>
</reference>
<protein>
    <recommendedName>
        <fullName evidence="2 4">o-succinylbenzoate synthase</fullName>
        <shortName evidence="2 5">OSB synthase</shortName>
        <shortName evidence="2 4">OSBS</shortName>
        <ecNumber evidence="2 3">4.2.1.113</ecNumber>
    </recommendedName>
    <alternativeName>
        <fullName evidence="2 5">4-(2'-carboxyphenyl)-4-oxybutyric acid synthase</fullName>
    </alternativeName>
    <alternativeName>
        <fullName evidence="2 5">o-succinylbenzoic acid synthase</fullName>
    </alternativeName>
</protein>
<accession>O34514</accession>
<dbReference type="EC" id="4.2.1.113" evidence="2 3"/>
<dbReference type="EMBL" id="AF008220">
    <property type="protein sequence ID" value="AAC00228.1"/>
    <property type="molecule type" value="Genomic_DNA"/>
</dbReference>
<dbReference type="EMBL" id="AL009126">
    <property type="protein sequence ID" value="CAB15056.1"/>
    <property type="molecule type" value="Genomic_DNA"/>
</dbReference>
<dbReference type="PIR" id="F69991">
    <property type="entry name" value="F69991"/>
</dbReference>
<dbReference type="RefSeq" id="NP_390956.1">
    <property type="nucleotide sequence ID" value="NC_000964.3"/>
</dbReference>
<dbReference type="RefSeq" id="WP_004398737.1">
    <property type="nucleotide sequence ID" value="NZ_OZ025638.1"/>
</dbReference>
<dbReference type="SMR" id="O34514"/>
<dbReference type="FunCoup" id="O34514">
    <property type="interactions" value="178"/>
</dbReference>
<dbReference type="STRING" id="224308.BSU30780"/>
<dbReference type="PaxDb" id="224308-BSU30780"/>
<dbReference type="EnsemblBacteria" id="CAB15056">
    <property type="protein sequence ID" value="CAB15056"/>
    <property type="gene ID" value="BSU_30780"/>
</dbReference>
<dbReference type="GeneID" id="937201"/>
<dbReference type="KEGG" id="bsu:BSU30780"/>
<dbReference type="PATRIC" id="fig|224308.179.peg.3336"/>
<dbReference type="eggNOG" id="COG4948">
    <property type="taxonomic scope" value="Bacteria"/>
</dbReference>
<dbReference type="InParanoid" id="O34514"/>
<dbReference type="OrthoDB" id="9774531at2"/>
<dbReference type="PhylomeDB" id="O34514"/>
<dbReference type="BioCyc" id="BSUB:BSU30780-MONOMER"/>
<dbReference type="BioCyc" id="MetaCyc:MONOMER-13796"/>
<dbReference type="SABIO-RK" id="O34514"/>
<dbReference type="UniPathway" id="UPA00079"/>
<dbReference type="UniPathway" id="UPA01057">
    <property type="reaction ID" value="UER00165"/>
</dbReference>
<dbReference type="Proteomes" id="UP000001570">
    <property type="component" value="Chromosome"/>
</dbReference>
<dbReference type="GO" id="GO:0000287">
    <property type="term" value="F:magnesium ion binding"/>
    <property type="evidence" value="ECO:0007669"/>
    <property type="project" value="UniProtKB-UniRule"/>
</dbReference>
<dbReference type="GO" id="GO:0043748">
    <property type="term" value="F:O-succinylbenzoate synthase activity"/>
    <property type="evidence" value="ECO:0007669"/>
    <property type="project" value="UniProtKB-EC"/>
</dbReference>
<dbReference type="GO" id="GO:0009234">
    <property type="term" value="P:menaquinone biosynthetic process"/>
    <property type="evidence" value="ECO:0000317"/>
    <property type="project" value="UniProtKB"/>
</dbReference>
<dbReference type="CDD" id="cd03317">
    <property type="entry name" value="NAAAR"/>
    <property type="match status" value="1"/>
</dbReference>
<dbReference type="Gene3D" id="3.20.20.120">
    <property type="entry name" value="Enolase-like C-terminal domain"/>
    <property type="match status" value="1"/>
</dbReference>
<dbReference type="Gene3D" id="3.30.390.10">
    <property type="entry name" value="Enolase-like, N-terminal domain"/>
    <property type="match status" value="1"/>
</dbReference>
<dbReference type="HAMAP" id="MF_01933">
    <property type="entry name" value="MenC_2"/>
    <property type="match status" value="1"/>
</dbReference>
<dbReference type="InterPro" id="IPR036849">
    <property type="entry name" value="Enolase-like_C_sf"/>
</dbReference>
<dbReference type="InterPro" id="IPR029017">
    <property type="entry name" value="Enolase-like_N"/>
</dbReference>
<dbReference type="InterPro" id="IPR029065">
    <property type="entry name" value="Enolase_C-like"/>
</dbReference>
<dbReference type="InterPro" id="IPR013342">
    <property type="entry name" value="Mandelate_racemase_C"/>
</dbReference>
<dbReference type="InterPro" id="IPR013341">
    <property type="entry name" value="Mandelate_racemase_N_dom"/>
</dbReference>
<dbReference type="InterPro" id="IPR047585">
    <property type="entry name" value="MenC"/>
</dbReference>
<dbReference type="InterPro" id="IPR010197">
    <property type="entry name" value="OSBS/NAAAR"/>
</dbReference>
<dbReference type="NCBIfam" id="TIGR01928">
    <property type="entry name" value="menC_lowGC_arch"/>
    <property type="match status" value="1"/>
</dbReference>
<dbReference type="PANTHER" id="PTHR48073:SF5">
    <property type="entry name" value="O-SUCCINYLBENZOATE SYNTHASE"/>
    <property type="match status" value="1"/>
</dbReference>
<dbReference type="PANTHER" id="PTHR48073">
    <property type="entry name" value="O-SUCCINYLBENZOATE SYNTHASE-RELATED"/>
    <property type="match status" value="1"/>
</dbReference>
<dbReference type="Pfam" id="PF13378">
    <property type="entry name" value="MR_MLE_C"/>
    <property type="match status" value="1"/>
</dbReference>
<dbReference type="Pfam" id="PF02746">
    <property type="entry name" value="MR_MLE_N"/>
    <property type="match status" value="1"/>
</dbReference>
<dbReference type="SFLD" id="SFLDS00001">
    <property type="entry name" value="Enolase"/>
    <property type="match status" value="1"/>
</dbReference>
<dbReference type="SFLD" id="SFLDF00009">
    <property type="entry name" value="o-succinylbenzoate_synthase"/>
    <property type="match status" value="1"/>
</dbReference>
<dbReference type="SMART" id="SM00922">
    <property type="entry name" value="MR_MLE"/>
    <property type="match status" value="1"/>
</dbReference>
<dbReference type="SUPFAM" id="SSF51604">
    <property type="entry name" value="Enolase C-terminal domain-like"/>
    <property type="match status" value="1"/>
</dbReference>
<dbReference type="SUPFAM" id="SSF54826">
    <property type="entry name" value="Enolase N-terminal domain-like"/>
    <property type="match status" value="1"/>
</dbReference>